<feature type="chain" id="PRO_0000297494" description="Eukaryotic translation initiation factor 3 subunit L">
    <location>
        <begin position="1"/>
        <end position="564"/>
    </location>
</feature>
<feature type="domain" description="PCI" evidence="2">
    <location>
        <begin position="331"/>
        <end position="537"/>
    </location>
</feature>
<accession>Q5F428</accession>
<name>EIF3L_CHICK</name>
<sequence length="564" mass="66683">MAYPGEDYDNDAAYDPYAYSNDYDMHTGDPKQDLAYERQYEQQTYQVIPEVIKNFIQYFHKTVSDLIDQKVYELQASRVSSDVIDQKVYEIQDIYENSWTKLTERFFKNTPWPEAEAIAPQVGNDAVFLILYKELYYRHIYAKVSGGPTLEQRFESYYNYCNLFNYILNADGPAPLELPNQWLWDIIDEFIYQFQSFSQYRCKTAKKSEEEIDFLRSNPKIWNVHSVLNVLHSLVDKSNINRQLEVYTSGGDPESVAGEYGRHSLYKMLGYFSLVGLLRLHSLLGDYYQAIKVLENIELNKKSMYSRVPECQVTTYYYVGFAYLMMRRYQDAIRVFANILLYIQRTKSMFQRTTYKYEMINKQNEQMHALLAIALTMYPMRIDESIHLQLREKYGDKMLRMQKGDAQVYEELFSYACPKFLSPVVPNYDNVHPNYHKEPFLQQLKVFADEVQQQAQLSTIRSFLKLYTTMPVAKLAGFLDLTEQEFRIQLLVFKHKMKNLVWTSGISALDGEFQSASEVDFYIDKDMIHIADTKVARRYGDFFIRQIHKFEELNRTLKKMGQRP</sequence>
<comment type="function">
    <text evidence="1">Component of the eukaryotic translation initiation factor 3 (eIF-3) complex, which is involved in protein synthesis of a specialized repertoire of mRNAs and, together with other initiation factors, stimulates binding of mRNA and methionyl-tRNAi to the 40S ribosome. The eIF-3 complex specifically targets and initiates translation of a subset of mRNAs involved in cell proliferation.</text>
</comment>
<comment type="subunit">
    <text evidence="1">Component of the eukaryotic translation initiation factor 3 (eIF-3) complex, which is composed of 13 subunits: EIF3A, EIF3B, EIF3C, EIF3D, EIF3E, EIF3F, EIF3G, EIF3H, EIF3I, EIF3J, EIF3K, EIF3L and EIF3M.</text>
</comment>
<comment type="subcellular location">
    <subcellularLocation>
        <location evidence="1">Cytoplasm</location>
    </subcellularLocation>
</comment>
<comment type="similarity">
    <text evidence="1">Belongs to the eIF-3 subunit L family.</text>
</comment>
<evidence type="ECO:0000255" key="1">
    <source>
        <dbReference type="HAMAP-Rule" id="MF_03011"/>
    </source>
</evidence>
<evidence type="ECO:0000255" key="2">
    <source>
        <dbReference type="PROSITE-ProRule" id="PRU01185"/>
    </source>
</evidence>
<organism>
    <name type="scientific">Gallus gallus</name>
    <name type="common">Chicken</name>
    <dbReference type="NCBI Taxonomy" id="9031"/>
    <lineage>
        <taxon>Eukaryota</taxon>
        <taxon>Metazoa</taxon>
        <taxon>Chordata</taxon>
        <taxon>Craniata</taxon>
        <taxon>Vertebrata</taxon>
        <taxon>Euteleostomi</taxon>
        <taxon>Archelosauria</taxon>
        <taxon>Archosauria</taxon>
        <taxon>Dinosauria</taxon>
        <taxon>Saurischia</taxon>
        <taxon>Theropoda</taxon>
        <taxon>Coelurosauria</taxon>
        <taxon>Aves</taxon>
        <taxon>Neognathae</taxon>
        <taxon>Galloanserae</taxon>
        <taxon>Galliformes</taxon>
        <taxon>Phasianidae</taxon>
        <taxon>Phasianinae</taxon>
        <taxon>Gallus</taxon>
    </lineage>
</organism>
<proteinExistence type="evidence at transcript level"/>
<gene>
    <name evidence="1" type="primary">EIF3L</name>
    <name evidence="1" type="synonym">EIF3EIP</name>
    <name evidence="1" type="synonym">EIF3S6IP</name>
    <name type="ORF">RCJMB04_3l6</name>
</gene>
<reference key="1">
    <citation type="journal article" date="2005" name="Genome Biol.">
        <title>Full-length cDNAs from chicken bursal lymphocytes to facilitate gene function analysis.</title>
        <authorList>
            <person name="Caldwell R.B."/>
            <person name="Kierzek A.M."/>
            <person name="Arakawa H."/>
            <person name="Bezzubov Y."/>
            <person name="Zaim J."/>
            <person name="Fiedler P."/>
            <person name="Kutter S."/>
            <person name="Blagodatski A."/>
            <person name="Kostovska D."/>
            <person name="Koter M."/>
            <person name="Plachy J."/>
            <person name="Carninci P."/>
            <person name="Hayashizaki Y."/>
            <person name="Buerstedde J.-M."/>
        </authorList>
    </citation>
    <scope>NUCLEOTIDE SEQUENCE [LARGE SCALE MRNA]</scope>
    <source>
        <strain>CB</strain>
        <tissue>Bursa of Fabricius</tissue>
    </source>
</reference>
<dbReference type="EMBL" id="AJ851472">
    <property type="protein sequence ID" value="CAH65106.1"/>
    <property type="molecule type" value="mRNA"/>
</dbReference>
<dbReference type="RefSeq" id="NP_001012553.1">
    <property type="nucleotide sequence ID" value="NM_001012535.3"/>
</dbReference>
<dbReference type="SMR" id="Q5F428"/>
<dbReference type="FunCoup" id="Q5F428">
    <property type="interactions" value="2480"/>
</dbReference>
<dbReference type="STRING" id="9031.ENSGALP00000020064"/>
<dbReference type="PaxDb" id="9031-ENSGALP00000020064"/>
<dbReference type="Ensembl" id="ENSGALT00010025223.1">
    <property type="protein sequence ID" value="ENSGALP00010014295.1"/>
    <property type="gene ID" value="ENSGALG00010010593.1"/>
</dbReference>
<dbReference type="GeneID" id="418033"/>
<dbReference type="KEGG" id="gga:418033"/>
<dbReference type="CTD" id="51386"/>
<dbReference type="VEuPathDB" id="HostDB:geneid_418033"/>
<dbReference type="eggNOG" id="KOG3677">
    <property type="taxonomic scope" value="Eukaryota"/>
</dbReference>
<dbReference type="GeneTree" id="ENSGT00390000000411"/>
<dbReference type="HOGENOM" id="CLU_029210_0_1_1"/>
<dbReference type="InParanoid" id="Q5F428"/>
<dbReference type="OMA" id="AGWFIRN"/>
<dbReference type="OrthoDB" id="15082at2759"/>
<dbReference type="PhylomeDB" id="Q5F428"/>
<dbReference type="Reactome" id="R-GGA-72649">
    <property type="pathway name" value="Translation initiation complex formation"/>
</dbReference>
<dbReference type="Reactome" id="R-GGA-72689">
    <property type="pathway name" value="Formation of a pool of free 40S subunits"/>
</dbReference>
<dbReference type="Reactome" id="R-GGA-72695">
    <property type="pathway name" value="Formation of the ternary complex, and subsequently, the 43S complex"/>
</dbReference>
<dbReference type="Reactome" id="R-GGA-72702">
    <property type="pathway name" value="Ribosomal scanning and start codon recognition"/>
</dbReference>
<dbReference type="PRO" id="PR:Q5F428"/>
<dbReference type="Proteomes" id="UP000000539">
    <property type="component" value="Chromosome 1"/>
</dbReference>
<dbReference type="Bgee" id="ENSGALG00000012296">
    <property type="expression patterns" value="Expressed in spleen and 13 other cell types or tissues"/>
</dbReference>
<dbReference type="GO" id="GO:0016282">
    <property type="term" value="C:eukaryotic 43S preinitiation complex"/>
    <property type="evidence" value="ECO:0007669"/>
    <property type="project" value="UniProtKB-UniRule"/>
</dbReference>
<dbReference type="GO" id="GO:0033290">
    <property type="term" value="C:eukaryotic 48S preinitiation complex"/>
    <property type="evidence" value="ECO:0007669"/>
    <property type="project" value="UniProtKB-UniRule"/>
</dbReference>
<dbReference type="GO" id="GO:0005852">
    <property type="term" value="C:eukaryotic translation initiation factor 3 complex"/>
    <property type="evidence" value="ECO:0000250"/>
    <property type="project" value="UniProtKB"/>
</dbReference>
<dbReference type="GO" id="GO:0003743">
    <property type="term" value="F:translation initiation factor activity"/>
    <property type="evidence" value="ECO:0007669"/>
    <property type="project" value="UniProtKB-UniRule"/>
</dbReference>
<dbReference type="GO" id="GO:0001732">
    <property type="term" value="P:formation of cytoplasmic translation initiation complex"/>
    <property type="evidence" value="ECO:0007669"/>
    <property type="project" value="UniProtKB-UniRule"/>
</dbReference>
<dbReference type="GO" id="GO:0006413">
    <property type="term" value="P:translational initiation"/>
    <property type="evidence" value="ECO:0000250"/>
    <property type="project" value="UniProtKB"/>
</dbReference>
<dbReference type="HAMAP" id="MF_03011">
    <property type="entry name" value="eIF3l"/>
    <property type="match status" value="1"/>
</dbReference>
<dbReference type="InterPro" id="IPR019382">
    <property type="entry name" value="eIF3l"/>
</dbReference>
<dbReference type="InterPro" id="IPR000717">
    <property type="entry name" value="PCI_dom"/>
</dbReference>
<dbReference type="InterPro" id="IPR011990">
    <property type="entry name" value="TPR-like_helical_dom_sf"/>
</dbReference>
<dbReference type="PANTHER" id="PTHR13242">
    <property type="entry name" value="EUKARYOTIC TRANSLATION INITIATION FACTOR 3"/>
    <property type="match status" value="1"/>
</dbReference>
<dbReference type="PANTHER" id="PTHR13242:SF0">
    <property type="entry name" value="EUKARYOTIC TRANSLATION INITIATION FACTOR 3 SUBUNIT L"/>
    <property type="match status" value="1"/>
</dbReference>
<dbReference type="Pfam" id="PF10255">
    <property type="entry name" value="Paf67"/>
    <property type="match status" value="1"/>
</dbReference>
<dbReference type="SUPFAM" id="SSF48452">
    <property type="entry name" value="TPR-like"/>
    <property type="match status" value="1"/>
</dbReference>
<dbReference type="PROSITE" id="PS50250">
    <property type="entry name" value="PCI"/>
    <property type="match status" value="1"/>
</dbReference>
<keyword id="KW-0963">Cytoplasm</keyword>
<keyword id="KW-0396">Initiation factor</keyword>
<keyword id="KW-0648">Protein biosynthesis</keyword>
<keyword id="KW-1185">Reference proteome</keyword>
<protein>
    <recommendedName>
        <fullName evidence="1">Eukaryotic translation initiation factor 3 subunit L</fullName>
        <shortName evidence="1">eIF3l</shortName>
    </recommendedName>
</protein>